<accession>B6JCG7</accession>
<accession>F8BRF8</accession>
<organism>
    <name type="scientific">Afipia carboxidovorans (strain ATCC 49405 / DSM 1227 / KCTC 32145 / OM5)</name>
    <name type="common">Oligotropha carboxidovorans</name>
    <dbReference type="NCBI Taxonomy" id="504832"/>
    <lineage>
        <taxon>Bacteria</taxon>
        <taxon>Pseudomonadati</taxon>
        <taxon>Pseudomonadota</taxon>
        <taxon>Alphaproteobacteria</taxon>
        <taxon>Hyphomicrobiales</taxon>
        <taxon>Nitrobacteraceae</taxon>
        <taxon>Afipia</taxon>
    </lineage>
</organism>
<name>COAA_AFIC5</name>
<feature type="chain" id="PRO_1000099939" description="Pantothenate kinase">
    <location>
        <begin position="1"/>
        <end position="318"/>
    </location>
</feature>
<feature type="binding site" evidence="1">
    <location>
        <begin position="96"/>
        <end position="103"/>
    </location>
    <ligand>
        <name>ATP</name>
        <dbReference type="ChEBI" id="CHEBI:30616"/>
    </ligand>
</feature>
<sequence>MTTGAELQKYDPYRTFTREQWAKLRDDTPMTLRAEEIERMHSMLDRLDIKEVEEIYLPLSRLLSFYVSAARRLFESERRFLRIRDRKMPYIIGVAGSVAVGKSTTARVLQALLARWSPKPKVDLITTDGFLHSNAYLERAGLMDKKGFPESYNLGALLTFLSDIKAGRRDVRAPVYSHLTYDIVPNETIEIDQPDILIVEGLNVLQTGRLPADGKAVPFISDFFDFSVYIDADESTLQEWYAARFLKLRDTAFSDPRSYFHRYAGLSDEAAREKALSIWNKINRVNLRENVLPTRPRATLILKKGSDHVVERVSLRRL</sequence>
<proteinExistence type="inferred from homology"/>
<protein>
    <recommendedName>
        <fullName evidence="1">Pantothenate kinase</fullName>
        <ecNumber evidence="1">2.7.1.33</ecNumber>
    </recommendedName>
    <alternativeName>
        <fullName evidence="1">Pantothenic acid kinase</fullName>
    </alternativeName>
</protein>
<keyword id="KW-0067">ATP-binding</keyword>
<keyword id="KW-0173">Coenzyme A biosynthesis</keyword>
<keyword id="KW-0963">Cytoplasm</keyword>
<keyword id="KW-0418">Kinase</keyword>
<keyword id="KW-0547">Nucleotide-binding</keyword>
<keyword id="KW-1185">Reference proteome</keyword>
<keyword id="KW-0808">Transferase</keyword>
<dbReference type="EC" id="2.7.1.33" evidence="1"/>
<dbReference type="EMBL" id="CP001196">
    <property type="protein sequence ID" value="ACI91547.1"/>
    <property type="molecule type" value="Genomic_DNA"/>
</dbReference>
<dbReference type="EMBL" id="CP002826">
    <property type="protein sequence ID" value="AEI04862.1"/>
    <property type="molecule type" value="Genomic_DNA"/>
</dbReference>
<dbReference type="RefSeq" id="WP_012561578.1">
    <property type="nucleotide sequence ID" value="NC_015684.1"/>
</dbReference>
<dbReference type="SMR" id="B6JCG7"/>
<dbReference type="STRING" id="504832.OCA5_c01300"/>
<dbReference type="KEGG" id="oca:OCAR_4401"/>
<dbReference type="KEGG" id="ocg:OCA5_c01300"/>
<dbReference type="PATRIC" id="fig|504832.7.peg.137"/>
<dbReference type="eggNOG" id="COG1072">
    <property type="taxonomic scope" value="Bacteria"/>
</dbReference>
<dbReference type="HOGENOM" id="CLU_053818_1_1_5"/>
<dbReference type="OrthoDB" id="1550976at2"/>
<dbReference type="UniPathway" id="UPA00241">
    <property type="reaction ID" value="UER00352"/>
</dbReference>
<dbReference type="Proteomes" id="UP000007730">
    <property type="component" value="Chromosome"/>
</dbReference>
<dbReference type="GO" id="GO:0005737">
    <property type="term" value="C:cytoplasm"/>
    <property type="evidence" value="ECO:0007669"/>
    <property type="project" value="UniProtKB-SubCell"/>
</dbReference>
<dbReference type="GO" id="GO:0005524">
    <property type="term" value="F:ATP binding"/>
    <property type="evidence" value="ECO:0007669"/>
    <property type="project" value="UniProtKB-UniRule"/>
</dbReference>
<dbReference type="GO" id="GO:0004594">
    <property type="term" value="F:pantothenate kinase activity"/>
    <property type="evidence" value="ECO:0007669"/>
    <property type="project" value="UniProtKB-UniRule"/>
</dbReference>
<dbReference type="GO" id="GO:0015937">
    <property type="term" value="P:coenzyme A biosynthetic process"/>
    <property type="evidence" value="ECO:0007669"/>
    <property type="project" value="UniProtKB-UniRule"/>
</dbReference>
<dbReference type="CDD" id="cd02025">
    <property type="entry name" value="PanK"/>
    <property type="match status" value="1"/>
</dbReference>
<dbReference type="Gene3D" id="3.40.50.300">
    <property type="entry name" value="P-loop containing nucleotide triphosphate hydrolases"/>
    <property type="match status" value="1"/>
</dbReference>
<dbReference type="HAMAP" id="MF_00215">
    <property type="entry name" value="Pantothen_kinase_1"/>
    <property type="match status" value="1"/>
</dbReference>
<dbReference type="InterPro" id="IPR027417">
    <property type="entry name" value="P-loop_NTPase"/>
</dbReference>
<dbReference type="InterPro" id="IPR004566">
    <property type="entry name" value="PanK"/>
</dbReference>
<dbReference type="InterPro" id="IPR006083">
    <property type="entry name" value="PRK/URK"/>
</dbReference>
<dbReference type="NCBIfam" id="TIGR00554">
    <property type="entry name" value="panK_bact"/>
    <property type="match status" value="1"/>
</dbReference>
<dbReference type="PANTHER" id="PTHR10285">
    <property type="entry name" value="URIDINE KINASE"/>
    <property type="match status" value="1"/>
</dbReference>
<dbReference type="Pfam" id="PF00485">
    <property type="entry name" value="PRK"/>
    <property type="match status" value="1"/>
</dbReference>
<dbReference type="PIRSF" id="PIRSF000545">
    <property type="entry name" value="Pantothenate_kin"/>
    <property type="match status" value="1"/>
</dbReference>
<dbReference type="SUPFAM" id="SSF52540">
    <property type="entry name" value="P-loop containing nucleoside triphosphate hydrolases"/>
    <property type="match status" value="1"/>
</dbReference>
<gene>
    <name evidence="1" type="primary">coaA</name>
    <name type="ordered locus">OCAR_4401</name>
    <name type="ordered locus">OCA5_c01300</name>
</gene>
<comment type="catalytic activity">
    <reaction evidence="1">
        <text>(R)-pantothenate + ATP = (R)-4'-phosphopantothenate + ADP + H(+)</text>
        <dbReference type="Rhea" id="RHEA:16373"/>
        <dbReference type="ChEBI" id="CHEBI:10986"/>
        <dbReference type="ChEBI" id="CHEBI:15378"/>
        <dbReference type="ChEBI" id="CHEBI:29032"/>
        <dbReference type="ChEBI" id="CHEBI:30616"/>
        <dbReference type="ChEBI" id="CHEBI:456216"/>
        <dbReference type="EC" id="2.7.1.33"/>
    </reaction>
</comment>
<comment type="pathway">
    <text evidence="1">Cofactor biosynthesis; coenzyme A biosynthesis; CoA from (R)-pantothenate: step 1/5.</text>
</comment>
<comment type="subcellular location">
    <subcellularLocation>
        <location evidence="1">Cytoplasm</location>
    </subcellularLocation>
</comment>
<comment type="similarity">
    <text evidence="1">Belongs to the prokaryotic pantothenate kinase family.</text>
</comment>
<evidence type="ECO:0000255" key="1">
    <source>
        <dbReference type="HAMAP-Rule" id="MF_00215"/>
    </source>
</evidence>
<reference key="1">
    <citation type="journal article" date="2008" name="J. Bacteriol.">
        <title>Genome sequence of the chemolithoautotrophic bacterium Oligotropha carboxidovorans OM5T.</title>
        <authorList>
            <person name="Paul D."/>
            <person name="Bridges S."/>
            <person name="Burgess S.C."/>
            <person name="Dandass Y."/>
            <person name="Lawrence M.L."/>
        </authorList>
    </citation>
    <scope>NUCLEOTIDE SEQUENCE [LARGE SCALE GENOMIC DNA]</scope>
    <source>
        <strain>ATCC 49405 / DSM 1227 / KCTC 32145 / OM5</strain>
    </source>
</reference>
<reference key="2">
    <citation type="journal article" date="2011" name="J. Bacteriol.">
        <title>Complete genome sequences of the chemolithoautotrophic Oligotropha carboxidovorans strains OM4 and OM5.</title>
        <authorList>
            <person name="Volland S."/>
            <person name="Rachinger M."/>
            <person name="Strittmatter A."/>
            <person name="Daniel R."/>
            <person name="Gottschalk G."/>
            <person name="Meyer O."/>
        </authorList>
    </citation>
    <scope>NUCLEOTIDE SEQUENCE [LARGE SCALE GENOMIC DNA]</scope>
    <source>
        <strain>ATCC 49405 / DSM 1227 / KCTC 32145 / OM5</strain>
    </source>
</reference>